<comment type="subunit">
    <text evidence="1">Part of the 30S ribosomal subunit.</text>
</comment>
<comment type="subcellular location">
    <subcellularLocation>
        <location>Plastid</location>
        <location>Chloroplast</location>
    </subcellularLocation>
</comment>
<comment type="similarity">
    <text evidence="2">Belongs to the universal ribosomal protein uS15 family.</text>
</comment>
<proteinExistence type="inferred from homology"/>
<reference key="1">
    <citation type="submission" date="2003-02" db="EMBL/GenBank/DDBJ databases">
        <title>Complete nucleotide sequence of Pinus koraiensis.</title>
        <authorList>
            <person name="Noh E.W."/>
            <person name="Lee J.S."/>
            <person name="Choi Y.I."/>
            <person name="Han M.S."/>
            <person name="Yi Y.S."/>
            <person name="Han S.U."/>
        </authorList>
    </citation>
    <scope>NUCLEOTIDE SEQUENCE [LARGE SCALE GENOMIC DNA]</scope>
    <source>
        <strain>KangWon16</strain>
    </source>
</reference>
<geneLocation type="chloroplast"/>
<evidence type="ECO:0000250" key="1"/>
<evidence type="ECO:0000305" key="2"/>
<keyword id="KW-0150">Chloroplast</keyword>
<keyword id="KW-0934">Plastid</keyword>
<keyword id="KW-0687">Ribonucleoprotein</keyword>
<keyword id="KW-0689">Ribosomal protein</keyword>
<accession>Q85WU8</accession>
<dbReference type="EMBL" id="AY228468">
    <property type="protein sequence ID" value="AAO74121.1"/>
    <property type="molecule type" value="Genomic_DNA"/>
</dbReference>
<dbReference type="RefSeq" id="NP_817287.1">
    <property type="nucleotide sequence ID" value="NC_004677.2"/>
</dbReference>
<dbReference type="SMR" id="Q85WU8"/>
<dbReference type="GeneID" id="806897"/>
<dbReference type="GO" id="GO:0009507">
    <property type="term" value="C:chloroplast"/>
    <property type="evidence" value="ECO:0007669"/>
    <property type="project" value="UniProtKB-SubCell"/>
</dbReference>
<dbReference type="GO" id="GO:1990904">
    <property type="term" value="C:ribonucleoprotein complex"/>
    <property type="evidence" value="ECO:0007669"/>
    <property type="project" value="UniProtKB-KW"/>
</dbReference>
<dbReference type="GO" id="GO:0005840">
    <property type="term" value="C:ribosome"/>
    <property type="evidence" value="ECO:0007669"/>
    <property type="project" value="UniProtKB-KW"/>
</dbReference>
<dbReference type="GO" id="GO:0003735">
    <property type="term" value="F:structural constituent of ribosome"/>
    <property type="evidence" value="ECO:0007669"/>
    <property type="project" value="InterPro"/>
</dbReference>
<dbReference type="GO" id="GO:0006412">
    <property type="term" value="P:translation"/>
    <property type="evidence" value="ECO:0007669"/>
    <property type="project" value="UniProtKB-UniRule"/>
</dbReference>
<dbReference type="CDD" id="cd00677">
    <property type="entry name" value="S15_NS1_EPRS_RNA-bind"/>
    <property type="match status" value="1"/>
</dbReference>
<dbReference type="Gene3D" id="1.10.287.10">
    <property type="entry name" value="S15/NS1, RNA-binding"/>
    <property type="match status" value="1"/>
</dbReference>
<dbReference type="HAMAP" id="MF_01343_B">
    <property type="entry name" value="Ribosomal_uS15_B"/>
    <property type="match status" value="1"/>
</dbReference>
<dbReference type="InterPro" id="IPR000589">
    <property type="entry name" value="Ribosomal_uS15"/>
</dbReference>
<dbReference type="InterPro" id="IPR005290">
    <property type="entry name" value="Ribosomal_uS15_bac-type"/>
</dbReference>
<dbReference type="InterPro" id="IPR009068">
    <property type="entry name" value="uS15_NS1_RNA-bd_sf"/>
</dbReference>
<dbReference type="NCBIfam" id="TIGR00952">
    <property type="entry name" value="S15_bact"/>
    <property type="match status" value="1"/>
</dbReference>
<dbReference type="PANTHER" id="PTHR23321">
    <property type="entry name" value="RIBOSOMAL PROTEIN S15, BACTERIAL AND ORGANELLAR"/>
    <property type="match status" value="1"/>
</dbReference>
<dbReference type="PANTHER" id="PTHR23321:SF26">
    <property type="entry name" value="SMALL RIBOSOMAL SUBUNIT PROTEIN US15M"/>
    <property type="match status" value="1"/>
</dbReference>
<dbReference type="Pfam" id="PF00312">
    <property type="entry name" value="Ribosomal_S15"/>
    <property type="match status" value="1"/>
</dbReference>
<dbReference type="SMART" id="SM01387">
    <property type="entry name" value="Ribosomal_S15"/>
    <property type="match status" value="1"/>
</dbReference>
<dbReference type="SUPFAM" id="SSF47060">
    <property type="entry name" value="S15/NS1 RNA-binding domain"/>
    <property type="match status" value="1"/>
</dbReference>
<dbReference type="PROSITE" id="PS00362">
    <property type="entry name" value="RIBOSOMAL_S15"/>
    <property type="match status" value="1"/>
</dbReference>
<gene>
    <name type="primary">rps15</name>
</gene>
<sequence>MIKNLSISSSLIPDKQRGSVESQVFFLTNRVLRLTQHLQLHGRDYSSQRGLWLILSKRKQLLVYLSKRDKLRYDDLIGQLSIRRLKTR</sequence>
<protein>
    <recommendedName>
        <fullName evidence="2">Small ribosomal subunit protein uS15c</fullName>
    </recommendedName>
    <alternativeName>
        <fullName>30S ribosomal protein S15, chloroplastic</fullName>
    </alternativeName>
</protein>
<organism>
    <name type="scientific">Pinus koraiensis</name>
    <name type="common">Korean pine</name>
    <dbReference type="NCBI Taxonomy" id="88728"/>
    <lineage>
        <taxon>Eukaryota</taxon>
        <taxon>Viridiplantae</taxon>
        <taxon>Streptophyta</taxon>
        <taxon>Embryophyta</taxon>
        <taxon>Tracheophyta</taxon>
        <taxon>Spermatophyta</taxon>
        <taxon>Pinopsida</taxon>
        <taxon>Pinidae</taxon>
        <taxon>Conifers I</taxon>
        <taxon>Pinales</taxon>
        <taxon>Pinaceae</taxon>
        <taxon>Pinus</taxon>
        <taxon>Pinus subgen. Strobus</taxon>
    </lineage>
</organism>
<name>RR15_PINKO</name>
<feature type="chain" id="PRO_0000115647" description="Small ribosomal subunit protein uS15c">
    <location>
        <begin position="1"/>
        <end position="88"/>
    </location>
</feature>